<reference key="1">
    <citation type="journal article" date="2003" name="Nat. Genet.">
        <title>Comparative analysis of the genome sequences of Bordetella pertussis, Bordetella parapertussis and Bordetella bronchiseptica.</title>
        <authorList>
            <person name="Parkhill J."/>
            <person name="Sebaihia M."/>
            <person name="Preston A."/>
            <person name="Murphy L.D."/>
            <person name="Thomson N.R."/>
            <person name="Harris D.E."/>
            <person name="Holden M.T.G."/>
            <person name="Churcher C.M."/>
            <person name="Bentley S.D."/>
            <person name="Mungall K.L."/>
            <person name="Cerdeno-Tarraga A.-M."/>
            <person name="Temple L."/>
            <person name="James K.D."/>
            <person name="Harris B."/>
            <person name="Quail M.A."/>
            <person name="Achtman M."/>
            <person name="Atkin R."/>
            <person name="Baker S."/>
            <person name="Basham D."/>
            <person name="Bason N."/>
            <person name="Cherevach I."/>
            <person name="Chillingworth T."/>
            <person name="Collins M."/>
            <person name="Cronin A."/>
            <person name="Davis P."/>
            <person name="Doggett J."/>
            <person name="Feltwell T."/>
            <person name="Goble A."/>
            <person name="Hamlin N."/>
            <person name="Hauser H."/>
            <person name="Holroyd S."/>
            <person name="Jagels K."/>
            <person name="Leather S."/>
            <person name="Moule S."/>
            <person name="Norberczak H."/>
            <person name="O'Neil S."/>
            <person name="Ormond D."/>
            <person name="Price C."/>
            <person name="Rabbinowitsch E."/>
            <person name="Rutter S."/>
            <person name="Sanders M."/>
            <person name="Saunders D."/>
            <person name="Seeger K."/>
            <person name="Sharp S."/>
            <person name="Simmonds M."/>
            <person name="Skelton J."/>
            <person name="Squares R."/>
            <person name="Squares S."/>
            <person name="Stevens K."/>
            <person name="Unwin L."/>
            <person name="Whitehead S."/>
            <person name="Barrell B.G."/>
            <person name="Maskell D.J."/>
        </authorList>
    </citation>
    <scope>NUCLEOTIDE SEQUENCE [LARGE SCALE GENOMIC DNA]</scope>
    <source>
        <strain>Tohama I / ATCC BAA-589 / NCTC 13251</strain>
    </source>
</reference>
<proteinExistence type="inferred from homology"/>
<keyword id="KW-0028">Amino-acid biosynthesis</keyword>
<keyword id="KW-0032">Aminotransferase</keyword>
<keyword id="KW-0055">Arginine biosynthesis</keyword>
<keyword id="KW-0963">Cytoplasm</keyword>
<keyword id="KW-0663">Pyridoxal phosphate</keyword>
<keyword id="KW-1185">Reference proteome</keyword>
<keyword id="KW-0808">Transferase</keyword>
<dbReference type="EC" id="2.6.1.11" evidence="1"/>
<dbReference type="EMBL" id="BX640421">
    <property type="protein sequence ID" value="CAE43798.1"/>
    <property type="molecule type" value="Genomic_DNA"/>
</dbReference>
<dbReference type="RefSeq" id="NP_882054.1">
    <property type="nucleotide sequence ID" value="NC_002929.2"/>
</dbReference>
<dbReference type="RefSeq" id="WP_010931526.1">
    <property type="nucleotide sequence ID" value="NZ_CP039022.1"/>
</dbReference>
<dbReference type="SMR" id="Q7VTJ7"/>
<dbReference type="STRING" id="257313.BP3539"/>
<dbReference type="PaxDb" id="257313-BP3539"/>
<dbReference type="KEGG" id="bpe:BP3539"/>
<dbReference type="PATRIC" id="fig|257313.5.peg.3831"/>
<dbReference type="eggNOG" id="COG4992">
    <property type="taxonomic scope" value="Bacteria"/>
</dbReference>
<dbReference type="HOGENOM" id="CLU_016922_10_1_4"/>
<dbReference type="UniPathway" id="UPA00068">
    <property type="reaction ID" value="UER00109"/>
</dbReference>
<dbReference type="Proteomes" id="UP000002676">
    <property type="component" value="Chromosome"/>
</dbReference>
<dbReference type="GO" id="GO:0005737">
    <property type="term" value="C:cytoplasm"/>
    <property type="evidence" value="ECO:0007669"/>
    <property type="project" value="UniProtKB-SubCell"/>
</dbReference>
<dbReference type="GO" id="GO:0042802">
    <property type="term" value="F:identical protein binding"/>
    <property type="evidence" value="ECO:0007669"/>
    <property type="project" value="TreeGrafter"/>
</dbReference>
<dbReference type="GO" id="GO:0003992">
    <property type="term" value="F:N2-acetyl-L-ornithine:2-oxoglutarate 5-aminotransferase activity"/>
    <property type="evidence" value="ECO:0007669"/>
    <property type="project" value="UniProtKB-UniRule"/>
</dbReference>
<dbReference type="GO" id="GO:0030170">
    <property type="term" value="F:pyridoxal phosphate binding"/>
    <property type="evidence" value="ECO:0007669"/>
    <property type="project" value="InterPro"/>
</dbReference>
<dbReference type="GO" id="GO:0006526">
    <property type="term" value="P:L-arginine biosynthetic process"/>
    <property type="evidence" value="ECO:0007669"/>
    <property type="project" value="UniProtKB-UniRule"/>
</dbReference>
<dbReference type="CDD" id="cd00610">
    <property type="entry name" value="OAT_like"/>
    <property type="match status" value="1"/>
</dbReference>
<dbReference type="FunFam" id="3.40.640.10:FF:000004">
    <property type="entry name" value="Acetylornithine aminotransferase"/>
    <property type="match status" value="1"/>
</dbReference>
<dbReference type="Gene3D" id="3.90.1150.10">
    <property type="entry name" value="Aspartate Aminotransferase, domain 1"/>
    <property type="match status" value="1"/>
</dbReference>
<dbReference type="Gene3D" id="3.40.640.10">
    <property type="entry name" value="Type I PLP-dependent aspartate aminotransferase-like (Major domain)"/>
    <property type="match status" value="1"/>
</dbReference>
<dbReference type="HAMAP" id="MF_01107">
    <property type="entry name" value="ArgD_aminotrans_3"/>
    <property type="match status" value="1"/>
</dbReference>
<dbReference type="InterPro" id="IPR004636">
    <property type="entry name" value="AcOrn/SuccOrn_fam"/>
</dbReference>
<dbReference type="InterPro" id="IPR005814">
    <property type="entry name" value="Aminotrans_3"/>
</dbReference>
<dbReference type="InterPro" id="IPR049704">
    <property type="entry name" value="Aminotrans_3_PPA_site"/>
</dbReference>
<dbReference type="InterPro" id="IPR050103">
    <property type="entry name" value="Class-III_PLP-dep_AT"/>
</dbReference>
<dbReference type="InterPro" id="IPR015424">
    <property type="entry name" value="PyrdxlP-dep_Trfase"/>
</dbReference>
<dbReference type="InterPro" id="IPR015421">
    <property type="entry name" value="PyrdxlP-dep_Trfase_major"/>
</dbReference>
<dbReference type="InterPro" id="IPR015422">
    <property type="entry name" value="PyrdxlP-dep_Trfase_small"/>
</dbReference>
<dbReference type="NCBIfam" id="TIGR00707">
    <property type="entry name" value="argD"/>
    <property type="match status" value="1"/>
</dbReference>
<dbReference type="NCBIfam" id="NF002325">
    <property type="entry name" value="PRK01278.1"/>
    <property type="match status" value="1"/>
</dbReference>
<dbReference type="PANTHER" id="PTHR11986:SF79">
    <property type="entry name" value="ACETYLORNITHINE AMINOTRANSFERASE, MITOCHONDRIAL"/>
    <property type="match status" value="1"/>
</dbReference>
<dbReference type="PANTHER" id="PTHR11986">
    <property type="entry name" value="AMINOTRANSFERASE CLASS III"/>
    <property type="match status" value="1"/>
</dbReference>
<dbReference type="Pfam" id="PF00202">
    <property type="entry name" value="Aminotran_3"/>
    <property type="match status" value="1"/>
</dbReference>
<dbReference type="PIRSF" id="PIRSF000521">
    <property type="entry name" value="Transaminase_4ab_Lys_Orn"/>
    <property type="match status" value="1"/>
</dbReference>
<dbReference type="SUPFAM" id="SSF53383">
    <property type="entry name" value="PLP-dependent transferases"/>
    <property type="match status" value="1"/>
</dbReference>
<dbReference type="PROSITE" id="PS00600">
    <property type="entry name" value="AA_TRANSFER_CLASS_3"/>
    <property type="match status" value="1"/>
</dbReference>
<protein>
    <recommendedName>
        <fullName evidence="1">Acetylornithine aminotransferase 1</fullName>
        <shortName evidence="1">ACOAT 1</shortName>
        <ecNumber evidence="1">2.6.1.11</ecNumber>
    </recommendedName>
</protein>
<sequence>MSSALANIYARLPVSFTHGRGVWLWDTGERRYLDALAGIGVSCLGHGHPGLVAAISEQAARLIHTSNIYEVPQQAALARRLAELSGMSEVLFNNSGSEANEAAIKLARYYGYKQGNTHAHIITMDSSWHGRTLATLAATGSDKARQGFGPMPSGFIQVPYNDLPAIRAAGEAEPRVTAVLLEVLQGEGGIRPSDMAFLQGVRQLCTERGWLLMIDEVQSGIGRTGKWFAHQWADIRPDVMTLAKGLAGGVPIGAMLAAGPAAGVFAPGSHGTTFGGGPLACAAGLAVIDAIEQEGLLGNAHEVGAHLHAALASELAGAPGVIEVRGRGLMLGIELDRPCGILATRAMEAGLLINVTRERVVRLLPPLILSGEEADQIVRILVPLIKQFLAQQQ</sequence>
<accession>Q7VTJ7</accession>
<comment type="catalytic activity">
    <reaction evidence="1">
        <text>N(2)-acetyl-L-ornithine + 2-oxoglutarate = N-acetyl-L-glutamate 5-semialdehyde + L-glutamate</text>
        <dbReference type="Rhea" id="RHEA:18049"/>
        <dbReference type="ChEBI" id="CHEBI:16810"/>
        <dbReference type="ChEBI" id="CHEBI:29123"/>
        <dbReference type="ChEBI" id="CHEBI:29985"/>
        <dbReference type="ChEBI" id="CHEBI:57805"/>
        <dbReference type="EC" id="2.6.1.11"/>
    </reaction>
</comment>
<comment type="cofactor">
    <cofactor evidence="1">
        <name>pyridoxal 5'-phosphate</name>
        <dbReference type="ChEBI" id="CHEBI:597326"/>
    </cofactor>
    <text evidence="1">Binds 1 pyridoxal phosphate per subunit.</text>
</comment>
<comment type="pathway">
    <text evidence="1">Amino-acid biosynthesis; L-arginine biosynthesis; N(2)-acetyl-L-ornithine from L-glutamate: step 4/4.</text>
</comment>
<comment type="subunit">
    <text evidence="1">Homodimer.</text>
</comment>
<comment type="subcellular location">
    <subcellularLocation>
        <location evidence="1">Cytoplasm</location>
    </subcellularLocation>
</comment>
<comment type="miscellaneous">
    <text evidence="1">May also have succinyldiaminopimelate aminotransferase activity, thus carrying out the corresponding step in lysine biosynthesis.</text>
</comment>
<comment type="similarity">
    <text evidence="1">Belongs to the class-III pyridoxal-phosphate-dependent aminotransferase family. ArgD subfamily.</text>
</comment>
<evidence type="ECO:0000255" key="1">
    <source>
        <dbReference type="HAMAP-Rule" id="MF_01107"/>
    </source>
</evidence>
<name>ARGD1_BORPE</name>
<organism>
    <name type="scientific">Bordetella pertussis (strain Tohama I / ATCC BAA-589 / NCTC 13251)</name>
    <dbReference type="NCBI Taxonomy" id="257313"/>
    <lineage>
        <taxon>Bacteria</taxon>
        <taxon>Pseudomonadati</taxon>
        <taxon>Pseudomonadota</taxon>
        <taxon>Betaproteobacteria</taxon>
        <taxon>Burkholderiales</taxon>
        <taxon>Alcaligenaceae</taxon>
        <taxon>Bordetella</taxon>
    </lineage>
</organism>
<gene>
    <name evidence="1" type="primary">argD1</name>
    <name type="ordered locus">BP3539</name>
</gene>
<feature type="chain" id="PRO_0000112727" description="Acetylornithine aminotransferase 1">
    <location>
        <begin position="1"/>
        <end position="393"/>
    </location>
</feature>
<feature type="binding site" evidence="1">
    <location>
        <position position="131"/>
    </location>
    <ligand>
        <name>N(2)-acetyl-L-ornithine</name>
        <dbReference type="ChEBI" id="CHEBI:57805"/>
    </ligand>
</feature>
<feature type="binding site" evidence="1">
    <location>
        <begin position="215"/>
        <end position="218"/>
    </location>
    <ligand>
        <name>pyridoxal 5'-phosphate</name>
        <dbReference type="ChEBI" id="CHEBI:597326"/>
    </ligand>
</feature>
<feature type="binding site" evidence="1">
    <location>
        <position position="272"/>
    </location>
    <ligand>
        <name>N(2)-acetyl-L-ornithine</name>
        <dbReference type="ChEBI" id="CHEBI:57805"/>
    </ligand>
</feature>
<feature type="binding site" evidence="1">
    <location>
        <position position="273"/>
    </location>
    <ligand>
        <name>pyridoxal 5'-phosphate</name>
        <dbReference type="ChEBI" id="CHEBI:597326"/>
    </ligand>
</feature>
<feature type="modified residue" description="N6-(pyridoxal phosphate)lysine" evidence="1">
    <location>
        <position position="244"/>
    </location>
</feature>